<protein>
    <recommendedName>
        <fullName evidence="1">HGPRTase-like protein</fullName>
        <ecNumber evidence="1">2.4.2.-</ecNumber>
    </recommendedName>
</protein>
<keyword id="KW-0660">Purine salvage</keyword>
<keyword id="KW-1185">Reference proteome</keyword>
<keyword id="KW-0808">Transferase</keyword>
<reference key="1">
    <citation type="journal article" date="2016" name="Stand. Genomic Sci.">
        <title>Complete genome sequence of the Antarctic Halorubrum lacusprofundi type strain ACAM 34.</title>
        <authorList>
            <person name="Anderson I.J."/>
            <person name="DasSarma P."/>
            <person name="Lucas S."/>
            <person name="Copeland A."/>
            <person name="Lapidus A."/>
            <person name="Del Rio T.G."/>
            <person name="Tice H."/>
            <person name="Dalin E."/>
            <person name="Bruce D.C."/>
            <person name="Goodwin L."/>
            <person name="Pitluck S."/>
            <person name="Sims D."/>
            <person name="Brettin T.S."/>
            <person name="Detter J.C."/>
            <person name="Han C.S."/>
            <person name="Larimer F."/>
            <person name="Hauser L."/>
            <person name="Land M."/>
            <person name="Ivanova N."/>
            <person name="Richardson P."/>
            <person name="Cavicchioli R."/>
            <person name="DasSarma S."/>
            <person name="Woese C.R."/>
            <person name="Kyrpides N.C."/>
        </authorList>
    </citation>
    <scope>NUCLEOTIDE SEQUENCE [LARGE SCALE GENOMIC DNA]</scope>
    <source>
        <strain>ATCC 49239 / DSM 5036 / JCM 8891 / ACAM 34</strain>
    </source>
</reference>
<gene>
    <name type="ordered locus">Hlac_1118</name>
</gene>
<sequence length="189" mass="20842">MDQLRQSLLDAPIIEKGEYQYFVHPISDGVPMLKPELLREIVIRIIRKAELENVDKIVTPAAMGIHISTALSLMTDIPLVVIRKRQYGLDGEVPLFQETGYSESEMYINDVEEGDRVLVLDDVLSTGGTMKAILDALTDEVGAEVVDVVAVIKKAGENELDDTDYNVKTLINVTVEDGEVVIVDAKGDD</sequence>
<organism>
    <name type="scientific">Halorubrum lacusprofundi (strain ATCC 49239 / DSM 5036 / JCM 8891 / ACAM 34)</name>
    <dbReference type="NCBI Taxonomy" id="416348"/>
    <lineage>
        <taxon>Archaea</taxon>
        <taxon>Methanobacteriati</taxon>
        <taxon>Methanobacteriota</taxon>
        <taxon>Stenosarchaea group</taxon>
        <taxon>Halobacteria</taxon>
        <taxon>Halobacteriales</taxon>
        <taxon>Haloferacaceae</taxon>
        <taxon>Halorubrum</taxon>
    </lineage>
</organism>
<dbReference type="EC" id="2.4.2.-" evidence="1"/>
<dbReference type="EMBL" id="CP001365">
    <property type="protein sequence ID" value="ACM56712.1"/>
    <property type="molecule type" value="Genomic_DNA"/>
</dbReference>
<dbReference type="RefSeq" id="WP_015909859.1">
    <property type="nucleotide sequence ID" value="NC_012029.1"/>
</dbReference>
<dbReference type="SMR" id="B9LMX4"/>
<dbReference type="GeneID" id="7400927"/>
<dbReference type="KEGG" id="hla:Hlac_1118"/>
<dbReference type="eggNOG" id="arCOG00030">
    <property type="taxonomic scope" value="Archaea"/>
</dbReference>
<dbReference type="HOGENOM" id="CLU_126376_0_0_2"/>
<dbReference type="Proteomes" id="UP000000740">
    <property type="component" value="Chromosome 1"/>
</dbReference>
<dbReference type="GO" id="GO:0016740">
    <property type="term" value="F:transferase activity"/>
    <property type="evidence" value="ECO:0007669"/>
    <property type="project" value="UniProtKB-KW"/>
</dbReference>
<dbReference type="GO" id="GO:0006166">
    <property type="term" value="P:purine ribonucleoside salvage"/>
    <property type="evidence" value="ECO:0007669"/>
    <property type="project" value="UniProtKB-KW"/>
</dbReference>
<dbReference type="CDD" id="cd06223">
    <property type="entry name" value="PRTases_typeI"/>
    <property type="match status" value="1"/>
</dbReference>
<dbReference type="Gene3D" id="3.40.50.2020">
    <property type="match status" value="1"/>
</dbReference>
<dbReference type="HAMAP" id="MF_01467">
    <property type="entry name" value="Hypx_phosphoribosyltr"/>
    <property type="match status" value="1"/>
</dbReference>
<dbReference type="InterPro" id="IPR026597">
    <property type="entry name" value="HGPRTase-like"/>
</dbReference>
<dbReference type="InterPro" id="IPR000836">
    <property type="entry name" value="PRibTrfase_dom"/>
</dbReference>
<dbReference type="InterPro" id="IPR029057">
    <property type="entry name" value="PRTase-like"/>
</dbReference>
<dbReference type="InterPro" id="IPR050118">
    <property type="entry name" value="Pur/Pyrimidine_PRTase"/>
</dbReference>
<dbReference type="NCBIfam" id="NF040646">
    <property type="entry name" value="HPT_Archaea"/>
    <property type="match status" value="1"/>
</dbReference>
<dbReference type="NCBIfam" id="NF002635">
    <property type="entry name" value="PRK02304.1-4"/>
    <property type="match status" value="1"/>
</dbReference>
<dbReference type="PANTHER" id="PTHR43864">
    <property type="entry name" value="HYPOXANTHINE/GUANINE PHOSPHORIBOSYLTRANSFERASE"/>
    <property type="match status" value="1"/>
</dbReference>
<dbReference type="PANTHER" id="PTHR43864:SF1">
    <property type="entry name" value="XANTHINE PHOSPHORIBOSYLTRANSFERASE"/>
    <property type="match status" value="1"/>
</dbReference>
<dbReference type="Pfam" id="PF00156">
    <property type="entry name" value="Pribosyltran"/>
    <property type="match status" value="1"/>
</dbReference>
<dbReference type="SUPFAM" id="SSF53271">
    <property type="entry name" value="PRTase-like"/>
    <property type="match status" value="1"/>
</dbReference>
<dbReference type="PROSITE" id="PS00103">
    <property type="entry name" value="PUR_PYR_PR_TRANSFER"/>
    <property type="match status" value="1"/>
</dbReference>
<comment type="function">
    <text evidence="1">May catalyze a purine salvage reaction, the substrate is unknown.</text>
</comment>
<comment type="similarity">
    <text evidence="1">Belongs to the purine/pyrimidine phosphoribosyltransferase family. Archaeal HPRT subfamily.</text>
</comment>
<accession>B9LMX4</accession>
<proteinExistence type="inferred from homology"/>
<feature type="chain" id="PRO_0000415459" description="HGPRTase-like protein">
    <location>
        <begin position="1"/>
        <end position="189"/>
    </location>
</feature>
<name>HPRL_HALLT</name>
<evidence type="ECO:0000255" key="1">
    <source>
        <dbReference type="HAMAP-Rule" id="MF_01467"/>
    </source>
</evidence>